<accession>Q9HLZ7</accession>
<comment type="function">
    <text evidence="1">Converts cobyric acid to cobinamide by the addition of aminopropanol on the F carboxylic group.</text>
</comment>
<comment type="pathway">
    <text>Cofactor biosynthesis; adenosylcobalamin biosynthesis.</text>
</comment>
<comment type="subcellular location">
    <subcellularLocation>
        <location evidence="3">Cell membrane</location>
        <topology evidence="3">Multi-pass membrane protein</topology>
    </subcellularLocation>
</comment>
<comment type="similarity">
    <text evidence="3">Belongs to the CobD/CbiB family.</text>
</comment>
<keyword id="KW-1003">Cell membrane</keyword>
<keyword id="KW-0169">Cobalamin biosynthesis</keyword>
<keyword id="KW-0472">Membrane</keyword>
<keyword id="KW-1185">Reference proteome</keyword>
<keyword id="KW-0812">Transmembrane</keyword>
<keyword id="KW-1133">Transmembrane helix</keyword>
<sequence length="304" mass="34452">MIIILIGAIAIDIIFGEPKEYIHPVVFSGKVSKRIETYFRHHDNRIVYGSIFAVAVIVITAIPYFLAIYVSSFVLVIYVIVSMVILKTTFSISAMGDHIRLVVESLKNGNISDARVYLSRVVRRDTSNLNENEISSAAIETIAEGLVDGYMTPLFFFIFLGIPGAFVARIINTLDSMCGYKDRENFEFGRFSAFMDTVINYIPARLSWFFIGFSADVLNYRHKVISPRKYVSRFDSVNAGWPISTMACALNLRLEKRGSYIVNDEGYQPSVRDIERSMHVFYVAVYSYTIIFVLPLLVAMAFLL</sequence>
<dbReference type="EMBL" id="AL445063">
    <property type="protein sequence ID" value="CAC11224.1"/>
    <property type="molecule type" value="Genomic_DNA"/>
</dbReference>
<dbReference type="FunCoup" id="Q9HLZ7">
    <property type="interactions" value="56"/>
</dbReference>
<dbReference type="STRING" id="273075.gene:9571291"/>
<dbReference type="PaxDb" id="273075-Ta0076"/>
<dbReference type="EnsemblBacteria" id="CAC11224">
    <property type="protein sequence ID" value="CAC11224"/>
    <property type="gene ID" value="CAC11224"/>
</dbReference>
<dbReference type="KEGG" id="tac:Ta0076"/>
<dbReference type="eggNOG" id="arCOG04274">
    <property type="taxonomic scope" value="Archaea"/>
</dbReference>
<dbReference type="HOGENOM" id="CLU_054212_0_2_2"/>
<dbReference type="InParanoid" id="Q9HLZ7"/>
<dbReference type="OrthoDB" id="46105at2157"/>
<dbReference type="UniPathway" id="UPA00148"/>
<dbReference type="Proteomes" id="UP000001024">
    <property type="component" value="Chromosome"/>
</dbReference>
<dbReference type="GO" id="GO:0005886">
    <property type="term" value="C:plasma membrane"/>
    <property type="evidence" value="ECO:0007669"/>
    <property type="project" value="UniProtKB-SubCell"/>
</dbReference>
<dbReference type="GO" id="GO:0015420">
    <property type="term" value="F:ABC-type vitamin B12 transporter activity"/>
    <property type="evidence" value="ECO:0007669"/>
    <property type="project" value="UniProtKB-UniRule"/>
</dbReference>
<dbReference type="GO" id="GO:0048472">
    <property type="term" value="F:threonine-phosphate decarboxylase activity"/>
    <property type="evidence" value="ECO:0007669"/>
    <property type="project" value="InterPro"/>
</dbReference>
<dbReference type="GO" id="GO:0009236">
    <property type="term" value="P:cobalamin biosynthetic process"/>
    <property type="evidence" value="ECO:0007669"/>
    <property type="project" value="UniProtKB-UniRule"/>
</dbReference>
<dbReference type="HAMAP" id="MF_00024">
    <property type="entry name" value="CobD_CbiB"/>
    <property type="match status" value="1"/>
</dbReference>
<dbReference type="InterPro" id="IPR004485">
    <property type="entry name" value="Cobalamin_biosynth_CobD/CbiB"/>
</dbReference>
<dbReference type="NCBIfam" id="TIGR00380">
    <property type="entry name" value="cobal_cbiB"/>
    <property type="match status" value="1"/>
</dbReference>
<dbReference type="NCBIfam" id="NF002281">
    <property type="entry name" value="PRK01209.2-5"/>
    <property type="match status" value="1"/>
</dbReference>
<dbReference type="PANTHER" id="PTHR34308">
    <property type="entry name" value="COBALAMIN BIOSYNTHESIS PROTEIN CBIB"/>
    <property type="match status" value="1"/>
</dbReference>
<dbReference type="PANTHER" id="PTHR34308:SF1">
    <property type="entry name" value="COBALAMIN BIOSYNTHESIS PROTEIN CBIB"/>
    <property type="match status" value="1"/>
</dbReference>
<dbReference type="Pfam" id="PF03186">
    <property type="entry name" value="CobD_Cbib"/>
    <property type="match status" value="1"/>
</dbReference>
<name>COBD_THEAC</name>
<feature type="chain" id="PRO_0000150947" description="Probable cobalamin biosynthesis protein CobD">
    <location>
        <begin position="1"/>
        <end position="304"/>
    </location>
</feature>
<feature type="transmembrane region" description="Helical" evidence="2">
    <location>
        <begin position="2"/>
        <end position="22"/>
    </location>
</feature>
<feature type="transmembrane region" description="Helical" evidence="2">
    <location>
        <begin position="44"/>
        <end position="64"/>
    </location>
</feature>
<feature type="transmembrane region" description="Helical" evidence="2">
    <location>
        <begin position="65"/>
        <end position="85"/>
    </location>
</feature>
<feature type="transmembrane region" description="Helical" evidence="2">
    <location>
        <begin position="147"/>
        <end position="167"/>
    </location>
</feature>
<feature type="transmembrane region" description="Helical" evidence="2">
    <location>
        <begin position="283"/>
        <end position="303"/>
    </location>
</feature>
<protein>
    <recommendedName>
        <fullName>Probable cobalamin biosynthesis protein CobD</fullName>
    </recommendedName>
</protein>
<proteinExistence type="inferred from homology"/>
<evidence type="ECO:0000250" key="1"/>
<evidence type="ECO:0000255" key="2"/>
<evidence type="ECO:0000305" key="3"/>
<gene>
    <name type="primary">cobD</name>
    <name type="ordered locus">Ta0076</name>
</gene>
<reference key="1">
    <citation type="journal article" date="2000" name="Nature">
        <title>The genome sequence of the thermoacidophilic scavenger Thermoplasma acidophilum.</title>
        <authorList>
            <person name="Ruepp A."/>
            <person name="Graml W."/>
            <person name="Santos-Martinez M.-L."/>
            <person name="Koretke K.K."/>
            <person name="Volker C."/>
            <person name="Mewes H.-W."/>
            <person name="Frishman D."/>
            <person name="Stocker S."/>
            <person name="Lupas A.N."/>
            <person name="Baumeister W."/>
        </authorList>
    </citation>
    <scope>NUCLEOTIDE SEQUENCE [LARGE SCALE GENOMIC DNA]</scope>
    <source>
        <strain>ATCC 25905 / DSM 1728 / JCM 9062 / NBRC 15155 / AMRC-C165</strain>
    </source>
</reference>
<organism>
    <name type="scientific">Thermoplasma acidophilum (strain ATCC 25905 / DSM 1728 / JCM 9062 / NBRC 15155 / AMRC-C165)</name>
    <dbReference type="NCBI Taxonomy" id="273075"/>
    <lineage>
        <taxon>Archaea</taxon>
        <taxon>Methanobacteriati</taxon>
        <taxon>Thermoplasmatota</taxon>
        <taxon>Thermoplasmata</taxon>
        <taxon>Thermoplasmatales</taxon>
        <taxon>Thermoplasmataceae</taxon>
        <taxon>Thermoplasma</taxon>
    </lineage>
</organism>